<organism>
    <name type="scientific">Escherichia coli (strain K12)</name>
    <dbReference type="NCBI Taxonomy" id="83333"/>
    <lineage>
        <taxon>Bacteria</taxon>
        <taxon>Pseudomonadati</taxon>
        <taxon>Pseudomonadota</taxon>
        <taxon>Gammaproteobacteria</taxon>
        <taxon>Enterobacterales</taxon>
        <taxon>Enterobacteriaceae</taxon>
        <taxon>Escherichia</taxon>
    </lineage>
</organism>
<reference key="1">
    <citation type="journal article" date="1997" name="Science">
        <title>The complete genome sequence of Escherichia coli K-12.</title>
        <authorList>
            <person name="Blattner F.R."/>
            <person name="Plunkett G. III"/>
            <person name="Bloch C.A."/>
            <person name="Perna N.T."/>
            <person name="Burland V."/>
            <person name="Riley M."/>
            <person name="Collado-Vides J."/>
            <person name="Glasner J.D."/>
            <person name="Rode C.K."/>
            <person name="Mayhew G.F."/>
            <person name="Gregor J."/>
            <person name="Davis N.W."/>
            <person name="Kirkpatrick H.A."/>
            <person name="Goeden M.A."/>
            <person name="Rose D.J."/>
            <person name="Mau B."/>
            <person name="Shao Y."/>
        </authorList>
    </citation>
    <scope>NUCLEOTIDE SEQUENCE [LARGE SCALE GENOMIC DNA]</scope>
    <source>
        <strain>K12 / MG1655 / ATCC 47076</strain>
    </source>
</reference>
<reference key="2">
    <citation type="journal article" date="2006" name="Mol. Syst. Biol.">
        <title>Highly accurate genome sequences of Escherichia coli K-12 strains MG1655 and W3110.</title>
        <authorList>
            <person name="Hayashi K."/>
            <person name="Morooka N."/>
            <person name="Yamamoto Y."/>
            <person name="Fujita K."/>
            <person name="Isono K."/>
            <person name="Choi S."/>
            <person name="Ohtsubo E."/>
            <person name="Baba T."/>
            <person name="Wanner B.L."/>
            <person name="Mori H."/>
            <person name="Horiuchi T."/>
        </authorList>
    </citation>
    <scope>NUCLEOTIDE SEQUENCE [LARGE SCALE GENOMIC DNA]</scope>
    <source>
        <strain>K12 / W3110 / ATCC 27325 / DSM 5911</strain>
    </source>
</reference>
<reference key="3">
    <citation type="journal article" date="1996" name="J. Biol. Chem.">
        <title>Identification of the cpdA gene encoding cyclic 3',5'-adenosine monophosphate phosphodiesterase in Escherichia coli.</title>
        <authorList>
            <person name="Imamura R."/>
            <person name="Yamanaka K."/>
            <person name="Ogura T."/>
            <person name="Hiraga S."/>
            <person name="Fujita N."/>
            <person name="Ishihama A."/>
            <person name="Niki H."/>
        </authorList>
    </citation>
    <scope>NUCLEOTIDE SEQUENCE [GENOMIC DNA] OF 1-137</scope>
    <source>
        <strain>K12</strain>
    </source>
</reference>
<reference key="4">
    <citation type="journal article" date="2005" name="FEMS Microbiol. Rev.">
        <title>Enzyme genomics: application of general enzymatic screens to discover new enzymes.</title>
        <authorList>
            <person name="Kuznetsova E."/>
            <person name="Proudfoot M."/>
            <person name="Sanders S.A."/>
            <person name="Reinking J."/>
            <person name="Savchenko A."/>
            <person name="Arrowsmith C.H."/>
            <person name="Edwards A.M."/>
            <person name="Yakunin A.F."/>
        </authorList>
    </citation>
    <scope>FUNCTION</scope>
</reference>
<gene>
    <name type="primary">yqiA</name>
    <name type="synonym">yzzI</name>
    <name type="ordered locus">b3031</name>
    <name type="ordered locus">JW2999</name>
</gene>
<proteinExistence type="predicted"/>
<name>YQIA_ECOLI</name>
<accession>P0A8Z7</accession>
<accession>P36653</accession>
<accession>Q2M9G9</accession>
<comment type="function">
    <text evidence="1">Displays esterase activity toward palmitoyl-CoA and pNP-butyrate.</text>
</comment>
<protein>
    <recommendedName>
        <fullName>Esterase YqiA</fullName>
        <ecNumber>3.1.-.-</ecNumber>
    </recommendedName>
</protein>
<evidence type="ECO:0000269" key="1">
    <source>
    </source>
</evidence>
<evidence type="ECO:0000305" key="2"/>
<sequence length="193" mass="21642">MSTLLYLHGFNSSPRSAKASLLKNWLAEHHPDVEMIIPQLPPYPSDAAELLESIVLEHGGDSLGIVGSSLGGYYATWLSQCFMLPAVVVNPAVRPFELLTDYLGQNENPYTGQQYVLESRHIYDLKVMQIDPLEAPDLIWLLQQTGDEVLDYRQAVAYYASCRQTVIEGGNHAFTGFEDYFNPIVDFLGLHHL</sequence>
<keyword id="KW-0378">Hydrolase</keyword>
<keyword id="KW-1185">Reference proteome</keyword>
<keyword id="KW-0719">Serine esterase</keyword>
<feature type="chain" id="PRO_0000066446" description="Esterase YqiA">
    <location>
        <begin position="1"/>
        <end position="193"/>
    </location>
</feature>
<feature type="sequence conflict" description="In Ref. 3." evidence="2" ref="3">
    <original>APD</original>
    <variation>GRI</variation>
    <location>
        <begin position="135"/>
        <end position="137"/>
    </location>
</feature>
<dbReference type="EC" id="3.1.-.-"/>
<dbReference type="EMBL" id="U28377">
    <property type="protein sequence ID" value="AAA69199.1"/>
    <property type="molecule type" value="Genomic_DNA"/>
</dbReference>
<dbReference type="EMBL" id="U00096">
    <property type="protein sequence ID" value="AAC76067.1"/>
    <property type="molecule type" value="Genomic_DNA"/>
</dbReference>
<dbReference type="EMBL" id="AP009048">
    <property type="protein sequence ID" value="BAE77087.1"/>
    <property type="molecule type" value="Genomic_DNA"/>
</dbReference>
<dbReference type="EMBL" id="D16557">
    <property type="status" value="NOT_ANNOTATED_CDS"/>
    <property type="molecule type" value="Genomic_DNA"/>
</dbReference>
<dbReference type="PIR" id="D58723">
    <property type="entry name" value="D58723"/>
</dbReference>
<dbReference type="PIR" id="E65090">
    <property type="entry name" value="E65090"/>
</dbReference>
<dbReference type="RefSeq" id="NP_417503.1">
    <property type="nucleotide sequence ID" value="NC_000913.3"/>
</dbReference>
<dbReference type="RefSeq" id="WP_000105733.1">
    <property type="nucleotide sequence ID" value="NZ_STEB01000001.1"/>
</dbReference>
<dbReference type="SMR" id="P0A8Z7"/>
<dbReference type="BioGRID" id="4262394">
    <property type="interactions" value="12"/>
</dbReference>
<dbReference type="BioGRID" id="851805">
    <property type="interactions" value="1"/>
</dbReference>
<dbReference type="FunCoup" id="P0A8Z7">
    <property type="interactions" value="15"/>
</dbReference>
<dbReference type="IntAct" id="P0A8Z7">
    <property type="interactions" value="1"/>
</dbReference>
<dbReference type="STRING" id="511145.b3031"/>
<dbReference type="ESTHER" id="ecoli-yqia">
    <property type="family name" value="abh_upf00227"/>
</dbReference>
<dbReference type="MEROPS" id="S09.A40"/>
<dbReference type="jPOST" id="P0A8Z7"/>
<dbReference type="PaxDb" id="511145-b3031"/>
<dbReference type="EnsemblBacteria" id="AAC76067">
    <property type="protein sequence ID" value="AAC76067"/>
    <property type="gene ID" value="b3031"/>
</dbReference>
<dbReference type="GeneID" id="93778962"/>
<dbReference type="GeneID" id="947488"/>
<dbReference type="KEGG" id="ecj:JW2999"/>
<dbReference type="KEGG" id="eco:b3031"/>
<dbReference type="KEGG" id="ecoc:C3026_16555"/>
<dbReference type="PATRIC" id="fig|1411691.4.peg.3700"/>
<dbReference type="EchoBASE" id="EB2103"/>
<dbReference type="eggNOG" id="COG3150">
    <property type="taxonomic scope" value="Bacteria"/>
</dbReference>
<dbReference type="HOGENOM" id="CLU_090996_2_0_6"/>
<dbReference type="InParanoid" id="P0A8Z7"/>
<dbReference type="OMA" id="MLAHYPG"/>
<dbReference type="OrthoDB" id="9814831at2"/>
<dbReference type="PhylomeDB" id="P0A8Z7"/>
<dbReference type="BioCyc" id="EcoCyc:G7578-MONOMER"/>
<dbReference type="BRENDA" id="3.1.4.17">
    <property type="organism ID" value="2026"/>
</dbReference>
<dbReference type="PRO" id="PR:P0A8Z7"/>
<dbReference type="Proteomes" id="UP000000625">
    <property type="component" value="Chromosome"/>
</dbReference>
<dbReference type="GO" id="GO:0005829">
    <property type="term" value="C:cytosol"/>
    <property type="evidence" value="ECO:0000318"/>
    <property type="project" value="GO_Central"/>
</dbReference>
<dbReference type="GO" id="GO:0052689">
    <property type="term" value="F:carboxylic ester hydrolase activity"/>
    <property type="evidence" value="ECO:0007669"/>
    <property type="project" value="UniProtKB-KW"/>
</dbReference>
<dbReference type="GO" id="GO:0016788">
    <property type="term" value="F:hydrolase activity, acting on ester bonds"/>
    <property type="evidence" value="ECO:0000314"/>
    <property type="project" value="EcoCyc"/>
</dbReference>
<dbReference type="FunFam" id="3.40.50.1820:FF:000027">
    <property type="entry name" value="Esterase YqiA"/>
    <property type="match status" value="1"/>
</dbReference>
<dbReference type="Gene3D" id="3.40.50.1820">
    <property type="entry name" value="alpha/beta hydrolase"/>
    <property type="match status" value="1"/>
</dbReference>
<dbReference type="InterPro" id="IPR029058">
    <property type="entry name" value="AB_hydrolase_fold"/>
</dbReference>
<dbReference type="InterPro" id="IPR008886">
    <property type="entry name" value="UPF0227/Esterase_YqiA"/>
</dbReference>
<dbReference type="NCBIfam" id="NF008291">
    <property type="entry name" value="PRK11071.1"/>
    <property type="match status" value="1"/>
</dbReference>
<dbReference type="PANTHER" id="PTHR35602:SF3">
    <property type="entry name" value="ESTERASE YQIA"/>
    <property type="match status" value="1"/>
</dbReference>
<dbReference type="PANTHER" id="PTHR35602">
    <property type="entry name" value="ESTERASE YQIA-RELATED"/>
    <property type="match status" value="1"/>
</dbReference>
<dbReference type="Pfam" id="PF05728">
    <property type="entry name" value="UPF0227"/>
    <property type="match status" value="1"/>
</dbReference>
<dbReference type="SUPFAM" id="SSF53474">
    <property type="entry name" value="alpha/beta-Hydrolases"/>
    <property type="match status" value="1"/>
</dbReference>